<comment type="function">
    <text evidence="1">Receptor for MSH (alpha, beta and gamma) and ACTH. The activity of this receptor is mediated by G proteins which activate adenylate cyclase. Mediates melanogenesis, the production of eumelanin (black/brown) and phaeomelanin (red/yellow), via regulation of cAMP signaling in melanocytes.</text>
</comment>
<comment type="subunit">
    <text evidence="1">Interacts with MGRN1, but does not undergo MGRN1-mediated ubiquitination; this interaction competes with GNAS-binding and thus inhibits agonist-induced cAMP production. Interacts with OPN3; the interaction results in a decrease in MC1R-mediated cAMP signaling and ultimately a decrease in melanin production in melanocytes.</text>
</comment>
<comment type="subcellular location">
    <subcellularLocation>
        <location evidence="1">Cell membrane</location>
        <topology evidence="2">Multi-pass membrane protein</topology>
    </subcellularLocation>
</comment>
<comment type="similarity">
    <text evidence="3">Belongs to the G-protein coupled receptor 1 family.</text>
</comment>
<feature type="chain" id="PRO_0000069826" description="Melanocyte-stimulating hormone receptor">
    <location>
        <begin position="1"/>
        <end position="317"/>
    </location>
</feature>
<feature type="topological domain" description="Extracellular" evidence="2">
    <location>
        <begin position="1"/>
        <end position="37"/>
    </location>
</feature>
<feature type="transmembrane region" description="Helical; Name=1" evidence="2">
    <location>
        <begin position="38"/>
        <end position="63"/>
    </location>
</feature>
<feature type="topological domain" description="Cytoplasmic" evidence="2">
    <location>
        <begin position="64"/>
        <end position="72"/>
    </location>
</feature>
<feature type="transmembrane region" description="Helical; Name=2" evidence="2">
    <location>
        <begin position="73"/>
        <end position="93"/>
    </location>
</feature>
<feature type="topological domain" description="Extracellular" evidence="2">
    <location>
        <begin position="94"/>
        <end position="118"/>
    </location>
</feature>
<feature type="transmembrane region" description="Helical; Name=3" evidence="2">
    <location>
        <begin position="119"/>
        <end position="140"/>
    </location>
</feature>
<feature type="topological domain" description="Cytoplasmic" evidence="2">
    <location>
        <begin position="141"/>
        <end position="163"/>
    </location>
</feature>
<feature type="transmembrane region" description="Helical; Name=4" evidence="2">
    <location>
        <begin position="164"/>
        <end position="183"/>
    </location>
</feature>
<feature type="topological domain" description="Extracellular" evidence="2">
    <location>
        <begin position="184"/>
        <end position="191"/>
    </location>
</feature>
<feature type="transmembrane region" description="Helical; Name=5" evidence="2">
    <location>
        <begin position="192"/>
        <end position="211"/>
    </location>
</feature>
<feature type="topological domain" description="Cytoplasmic" evidence="2">
    <location>
        <begin position="212"/>
        <end position="240"/>
    </location>
</feature>
<feature type="transmembrane region" description="Helical; Name=6" evidence="2">
    <location>
        <begin position="241"/>
        <end position="266"/>
    </location>
</feature>
<feature type="topological domain" description="Extracellular" evidence="2">
    <location>
        <begin position="267"/>
        <end position="279"/>
    </location>
</feature>
<feature type="transmembrane region" description="Helical; Name=7" evidence="2">
    <location>
        <begin position="280"/>
        <end position="300"/>
    </location>
</feature>
<feature type="topological domain" description="Cytoplasmic" evidence="2">
    <location>
        <begin position="301"/>
        <end position="317"/>
    </location>
</feature>
<feature type="glycosylation site" description="N-linked (GlcNAc...) asparagine" evidence="2">
    <location>
        <position position="15"/>
    </location>
</feature>
<feature type="glycosylation site" description="N-linked (GlcNAc...) asparagine" evidence="2">
    <location>
        <position position="29"/>
    </location>
</feature>
<evidence type="ECO:0000250" key="1">
    <source>
        <dbReference type="UniProtKB" id="Q01726"/>
    </source>
</evidence>
<evidence type="ECO:0000255" key="2"/>
<evidence type="ECO:0000255" key="3">
    <source>
        <dbReference type="PROSITE-ProRule" id="PRU00521"/>
    </source>
</evidence>
<name>MSHR_LORTA</name>
<dbReference type="EMBL" id="AY205137">
    <property type="protein sequence ID" value="AAP31011.1"/>
    <property type="molecule type" value="Genomic_DNA"/>
</dbReference>
<dbReference type="GlyCosmos" id="Q864G0">
    <property type="glycosylation" value="2 sites, No reported glycans"/>
</dbReference>
<dbReference type="GO" id="GO:0005886">
    <property type="term" value="C:plasma membrane"/>
    <property type="evidence" value="ECO:0000250"/>
    <property type="project" value="UniProtKB"/>
</dbReference>
<dbReference type="GO" id="GO:0004980">
    <property type="term" value="F:melanocyte-stimulating hormone receptor activity"/>
    <property type="evidence" value="ECO:0007669"/>
    <property type="project" value="InterPro"/>
</dbReference>
<dbReference type="GO" id="GO:0007189">
    <property type="term" value="P:adenylate cyclase-activating G protein-coupled receptor signaling pathway"/>
    <property type="evidence" value="ECO:0007669"/>
    <property type="project" value="UniProtKB-ARBA"/>
</dbReference>
<dbReference type="FunFam" id="1.20.1070.10:FF:000211">
    <property type="entry name" value="Melanocyte-stimulating hormone receptor"/>
    <property type="match status" value="1"/>
</dbReference>
<dbReference type="Gene3D" id="1.20.1070.10">
    <property type="entry name" value="Rhodopsin 7-helix transmembrane proteins"/>
    <property type="match status" value="1"/>
</dbReference>
<dbReference type="InterPro" id="IPR000276">
    <property type="entry name" value="GPCR_Rhodpsn"/>
</dbReference>
<dbReference type="InterPro" id="IPR017452">
    <property type="entry name" value="GPCR_Rhodpsn_7TM"/>
</dbReference>
<dbReference type="InterPro" id="IPR001671">
    <property type="entry name" value="Melcrt_ACTH_rcpt"/>
</dbReference>
<dbReference type="InterPro" id="IPR000761">
    <property type="entry name" value="MSH_rcpt"/>
</dbReference>
<dbReference type="PANTHER" id="PTHR22750">
    <property type="entry name" value="G-PROTEIN COUPLED RECEPTOR"/>
    <property type="match status" value="1"/>
</dbReference>
<dbReference type="Pfam" id="PF00001">
    <property type="entry name" value="7tm_1"/>
    <property type="match status" value="2"/>
</dbReference>
<dbReference type="PRINTS" id="PR00237">
    <property type="entry name" value="GPCRRHODOPSN"/>
</dbReference>
<dbReference type="PRINTS" id="PR00534">
    <property type="entry name" value="MCRFAMILY"/>
</dbReference>
<dbReference type="PRINTS" id="PR00536">
    <property type="entry name" value="MELNOCYTESHR"/>
</dbReference>
<dbReference type="SMART" id="SM01381">
    <property type="entry name" value="7TM_GPCR_Srsx"/>
    <property type="match status" value="1"/>
</dbReference>
<dbReference type="SUPFAM" id="SSF81321">
    <property type="entry name" value="Family A G protein-coupled receptor-like"/>
    <property type="match status" value="1"/>
</dbReference>
<dbReference type="PROSITE" id="PS00237">
    <property type="entry name" value="G_PROTEIN_RECEP_F1_1"/>
    <property type="match status" value="1"/>
</dbReference>
<dbReference type="PROSITE" id="PS50262">
    <property type="entry name" value="G_PROTEIN_RECEP_F1_2"/>
    <property type="match status" value="1"/>
</dbReference>
<accession>Q864G0</accession>
<gene>
    <name type="primary">MC1R</name>
</gene>
<organism>
    <name type="scientific">Loris tardigradus</name>
    <name type="common">Slender loris</name>
    <dbReference type="NCBI Taxonomy" id="9468"/>
    <lineage>
        <taxon>Eukaryota</taxon>
        <taxon>Metazoa</taxon>
        <taxon>Chordata</taxon>
        <taxon>Craniata</taxon>
        <taxon>Vertebrata</taxon>
        <taxon>Euteleostomi</taxon>
        <taxon>Mammalia</taxon>
        <taxon>Eutheria</taxon>
        <taxon>Euarchontoglires</taxon>
        <taxon>Primates</taxon>
        <taxon>Strepsirrhini</taxon>
        <taxon>Lorisiformes</taxon>
        <taxon>Lorisidae</taxon>
        <taxon>Loris</taxon>
    </lineage>
</organism>
<protein>
    <recommendedName>
        <fullName>Melanocyte-stimulating hormone receptor</fullName>
        <shortName>MSH-R</shortName>
    </recommendedName>
    <alternativeName>
        <fullName>Melanocortin receptor 1</fullName>
        <shortName>MC1-R</shortName>
    </alternativeName>
</protein>
<sequence>MPAQGSQRSLLGSLNSTLMATSSLGLSANQSGPQCLEVSVPDGLFLCLGLVSLVENMLVVAAIAKNRNLHSPMYCFICCLALSDLLVSVSNVLETAVMLLLEAGALAAQATVVQQLDNIIDVLVCSSMVSSLCFLGAIAMDRYISIFYALRYHSIVTLSRAQWATAAVWAAGILSSTLFIAYYDHTAVLLCLVVFFLAMLVLMAVLYAHMLTQACQHVQGITRLHKRQHLVQQGFGLKGAATLTILLGVFLLCWGPFFLHLTLIAVCPQHPTCSCVFKNFKLFLALIICNAIVDPLIYAFRXQELRKTLKEVLLFSW</sequence>
<proteinExistence type="inferred from homology"/>
<reference key="1">
    <citation type="journal article" date="2003" name="Am. J. Phys. Anthropol.">
        <title>Evolution of a pigmentation gene, the melanocortin-1 receptor, in primates.</title>
        <authorList>
            <person name="Mundy N.I."/>
            <person name="Kelly J."/>
        </authorList>
    </citation>
    <scope>NUCLEOTIDE SEQUENCE [GENOMIC DNA]</scope>
    <source>
        <strain>Isolate 1</strain>
    </source>
</reference>
<keyword id="KW-1003">Cell membrane</keyword>
<keyword id="KW-0297">G-protein coupled receptor</keyword>
<keyword id="KW-0325">Glycoprotein</keyword>
<keyword id="KW-0472">Membrane</keyword>
<keyword id="KW-0675">Receptor</keyword>
<keyword id="KW-0807">Transducer</keyword>
<keyword id="KW-0812">Transmembrane</keyword>
<keyword id="KW-1133">Transmembrane helix</keyword>